<protein>
    <recommendedName>
        <fullName evidence="1">Large ribosomal subunit protein uL10</fullName>
    </recommendedName>
    <alternativeName>
        <fullName evidence="2">50S ribosomal protein L10</fullName>
    </alternativeName>
</protein>
<gene>
    <name evidence="1" type="primary">rplJ</name>
    <name type="ordered locus">PLES_06561</name>
</gene>
<name>RL10_PSEA8</name>
<proteinExistence type="inferred from homology"/>
<comment type="function">
    <text evidence="1">Forms part of the ribosomal stalk, playing a central role in the interaction of the ribosome with GTP-bound translation factors.</text>
</comment>
<comment type="subunit">
    <text evidence="1">Part of the ribosomal stalk of the 50S ribosomal subunit. The N-terminus interacts with L11 and the large rRNA to form the base of the stalk. The C-terminus forms an elongated spine to which L12 dimers bind in a sequential fashion forming a multimeric L10(L12)X complex.</text>
</comment>
<comment type="similarity">
    <text evidence="1">Belongs to the universal ribosomal protein uL10 family.</text>
</comment>
<accession>B7V635</accession>
<sequence>MAIKLEDKKAIVAEVNEAAKAALSAVVADARGVTVGAMTGLRKEAREAGVYVKVVRNTLLKRAVEGTQFDVLNDVFKGPTLIAFSNEHPGAAARIFREFAKGQDKFEIKAAAFEGQFLAANQIDVLASLPTYDEAVSQLMSVIQGATSKLARTLAAIRDQKEAAAA</sequence>
<feature type="chain" id="PRO_1000120999" description="Large ribosomal subunit protein uL10">
    <location>
        <begin position="1"/>
        <end position="166"/>
    </location>
</feature>
<organism>
    <name type="scientific">Pseudomonas aeruginosa (strain LESB58)</name>
    <dbReference type="NCBI Taxonomy" id="557722"/>
    <lineage>
        <taxon>Bacteria</taxon>
        <taxon>Pseudomonadati</taxon>
        <taxon>Pseudomonadota</taxon>
        <taxon>Gammaproteobacteria</taxon>
        <taxon>Pseudomonadales</taxon>
        <taxon>Pseudomonadaceae</taxon>
        <taxon>Pseudomonas</taxon>
    </lineage>
</organism>
<reference key="1">
    <citation type="journal article" date="2009" name="Genome Res.">
        <title>Newly introduced genomic prophage islands are critical determinants of in vivo competitiveness in the Liverpool epidemic strain of Pseudomonas aeruginosa.</title>
        <authorList>
            <person name="Winstanley C."/>
            <person name="Langille M.G.I."/>
            <person name="Fothergill J.L."/>
            <person name="Kukavica-Ibrulj I."/>
            <person name="Paradis-Bleau C."/>
            <person name="Sanschagrin F."/>
            <person name="Thomson N.R."/>
            <person name="Winsor G.L."/>
            <person name="Quail M.A."/>
            <person name="Lennard N."/>
            <person name="Bignell A."/>
            <person name="Clarke L."/>
            <person name="Seeger K."/>
            <person name="Saunders D."/>
            <person name="Harris D."/>
            <person name="Parkhill J."/>
            <person name="Hancock R.E.W."/>
            <person name="Brinkman F.S.L."/>
            <person name="Levesque R.C."/>
        </authorList>
    </citation>
    <scope>NUCLEOTIDE SEQUENCE [LARGE SCALE GENOMIC DNA]</scope>
    <source>
        <strain>LESB58</strain>
    </source>
</reference>
<dbReference type="EMBL" id="FM209186">
    <property type="protein sequence ID" value="CAW25383.1"/>
    <property type="molecule type" value="Genomic_DNA"/>
</dbReference>
<dbReference type="RefSeq" id="WP_003093748.1">
    <property type="nucleotide sequence ID" value="NC_011770.1"/>
</dbReference>
<dbReference type="SMR" id="B7V635"/>
<dbReference type="GeneID" id="77219189"/>
<dbReference type="KEGG" id="pag:PLES_06561"/>
<dbReference type="HOGENOM" id="CLU_092227_0_2_6"/>
<dbReference type="GO" id="GO:0015934">
    <property type="term" value="C:large ribosomal subunit"/>
    <property type="evidence" value="ECO:0007669"/>
    <property type="project" value="InterPro"/>
</dbReference>
<dbReference type="GO" id="GO:0070180">
    <property type="term" value="F:large ribosomal subunit rRNA binding"/>
    <property type="evidence" value="ECO:0007669"/>
    <property type="project" value="UniProtKB-UniRule"/>
</dbReference>
<dbReference type="GO" id="GO:0003735">
    <property type="term" value="F:structural constituent of ribosome"/>
    <property type="evidence" value="ECO:0007669"/>
    <property type="project" value="InterPro"/>
</dbReference>
<dbReference type="GO" id="GO:0006412">
    <property type="term" value="P:translation"/>
    <property type="evidence" value="ECO:0007669"/>
    <property type="project" value="UniProtKB-UniRule"/>
</dbReference>
<dbReference type="CDD" id="cd05797">
    <property type="entry name" value="Ribosomal_L10"/>
    <property type="match status" value="1"/>
</dbReference>
<dbReference type="FunFam" id="3.30.70.1730:FF:000001">
    <property type="entry name" value="50S ribosomal protein L10"/>
    <property type="match status" value="1"/>
</dbReference>
<dbReference type="Gene3D" id="3.30.70.1730">
    <property type="match status" value="1"/>
</dbReference>
<dbReference type="Gene3D" id="6.10.250.2350">
    <property type="match status" value="1"/>
</dbReference>
<dbReference type="HAMAP" id="MF_00362">
    <property type="entry name" value="Ribosomal_uL10"/>
    <property type="match status" value="1"/>
</dbReference>
<dbReference type="InterPro" id="IPR001790">
    <property type="entry name" value="Ribosomal_uL10"/>
</dbReference>
<dbReference type="InterPro" id="IPR043141">
    <property type="entry name" value="Ribosomal_uL10-like_sf"/>
</dbReference>
<dbReference type="InterPro" id="IPR022973">
    <property type="entry name" value="Ribosomal_uL10_bac"/>
</dbReference>
<dbReference type="InterPro" id="IPR047865">
    <property type="entry name" value="Ribosomal_uL10_bac_type"/>
</dbReference>
<dbReference type="InterPro" id="IPR002363">
    <property type="entry name" value="Ribosomal_uL10_CS_bac"/>
</dbReference>
<dbReference type="NCBIfam" id="NF000955">
    <property type="entry name" value="PRK00099.1-1"/>
    <property type="match status" value="1"/>
</dbReference>
<dbReference type="PANTHER" id="PTHR11560">
    <property type="entry name" value="39S RIBOSOMAL PROTEIN L10, MITOCHONDRIAL"/>
    <property type="match status" value="1"/>
</dbReference>
<dbReference type="Pfam" id="PF00466">
    <property type="entry name" value="Ribosomal_L10"/>
    <property type="match status" value="1"/>
</dbReference>
<dbReference type="SUPFAM" id="SSF160369">
    <property type="entry name" value="Ribosomal protein L10-like"/>
    <property type="match status" value="1"/>
</dbReference>
<dbReference type="PROSITE" id="PS01109">
    <property type="entry name" value="RIBOSOMAL_L10"/>
    <property type="match status" value="1"/>
</dbReference>
<evidence type="ECO:0000255" key="1">
    <source>
        <dbReference type="HAMAP-Rule" id="MF_00362"/>
    </source>
</evidence>
<evidence type="ECO:0000305" key="2"/>
<keyword id="KW-0687">Ribonucleoprotein</keyword>
<keyword id="KW-0689">Ribosomal protein</keyword>
<keyword id="KW-0694">RNA-binding</keyword>
<keyword id="KW-0699">rRNA-binding</keyword>